<name>RL3_DEIRA</name>
<evidence type="ECO:0000250" key="1"/>
<evidence type="ECO:0000256" key="2">
    <source>
        <dbReference type="SAM" id="MobiDB-lite"/>
    </source>
</evidence>
<evidence type="ECO:0000269" key="3">
    <source>
    </source>
</evidence>
<evidence type="ECO:0000269" key="4">
    <source>
    </source>
</evidence>
<evidence type="ECO:0000269" key="5">
    <source>
    </source>
</evidence>
<evidence type="ECO:0000269" key="6">
    <source>
    </source>
</evidence>
<evidence type="ECO:0000269" key="7">
    <source>
    </source>
</evidence>
<evidence type="ECO:0000269" key="8">
    <source>
    </source>
</evidence>
<evidence type="ECO:0000305" key="9"/>
<evidence type="ECO:0007829" key="10">
    <source>
        <dbReference type="PDB" id="2ZJR"/>
    </source>
</evidence>
<evidence type="ECO:0007829" key="11">
    <source>
        <dbReference type="PDB" id="4IOA"/>
    </source>
</evidence>
<evidence type="ECO:0007829" key="12">
    <source>
        <dbReference type="PDB" id="5DM6"/>
    </source>
</evidence>
<sequence length="211" mass="22437">MKGILGTKIGMTQIWKNDRAIPVTVVLAGPCPIVQRKTAQTDGYEAVQIGYAPKAERKVNKPMQGHFAKAGVAPTRILREFRGFAPDGDSVNVDIFAEGEKIDATGTSKGKGTQGVMKRWNFAGGPASHGSKKWHRRPGSIGQRKTPGRVYKGKRMAGHMGMERVTVQNLEVVEIRAGENLILVKGAIPGANGGLVVLRSAAKASAAKGGK</sequence>
<organism>
    <name type="scientific">Deinococcus radiodurans (strain ATCC 13939 / DSM 20539 / JCM 16871 / CCUG 27074 / LMG 4051 / NBRC 15346 / NCIMB 9279 / VKM B-1422 / R1)</name>
    <dbReference type="NCBI Taxonomy" id="243230"/>
    <lineage>
        <taxon>Bacteria</taxon>
        <taxon>Thermotogati</taxon>
        <taxon>Deinococcota</taxon>
        <taxon>Deinococci</taxon>
        <taxon>Deinococcales</taxon>
        <taxon>Deinococcaceae</taxon>
        <taxon>Deinococcus</taxon>
    </lineage>
</organism>
<keyword id="KW-0002">3D-structure</keyword>
<keyword id="KW-0903">Direct protein sequencing</keyword>
<keyword id="KW-1185">Reference proteome</keyword>
<keyword id="KW-0687">Ribonucleoprotein</keyword>
<keyword id="KW-0689">Ribosomal protein</keyword>
<keyword id="KW-0694">RNA-binding</keyword>
<keyword id="KW-0699">rRNA-binding</keyword>
<gene>
    <name type="primary">rplC</name>
    <name type="ordered locus">DR_0311</name>
</gene>
<feature type="chain" id="PRO_0000077097" description="Large ribosomal subunit protein uL3">
    <location>
        <begin position="1"/>
        <end position="211"/>
    </location>
</feature>
<feature type="region of interest" description="Disordered" evidence="2">
    <location>
        <begin position="125"/>
        <end position="148"/>
    </location>
</feature>
<feature type="strand" evidence="12">
    <location>
        <begin position="3"/>
        <end position="16"/>
    </location>
</feature>
<feature type="strand" evidence="12">
    <location>
        <begin position="19"/>
        <end position="27"/>
    </location>
</feature>
<feature type="strand" evidence="12">
    <location>
        <begin position="35"/>
        <end position="37"/>
    </location>
</feature>
<feature type="helix" evidence="12">
    <location>
        <begin position="39"/>
        <end position="42"/>
    </location>
</feature>
<feature type="strand" evidence="12">
    <location>
        <begin position="46"/>
        <end position="50"/>
    </location>
</feature>
<feature type="helix" evidence="12">
    <location>
        <begin position="56"/>
        <end position="58"/>
    </location>
</feature>
<feature type="helix" evidence="12">
    <location>
        <begin position="61"/>
        <end position="69"/>
    </location>
</feature>
<feature type="strand" evidence="12">
    <location>
        <begin position="78"/>
        <end position="83"/>
    </location>
</feature>
<feature type="strand" evidence="10">
    <location>
        <begin position="87"/>
        <end position="90"/>
    </location>
</feature>
<feature type="helix" evidence="12">
    <location>
        <begin position="92"/>
        <end position="95"/>
    </location>
</feature>
<feature type="strand" evidence="12">
    <location>
        <begin position="101"/>
        <end position="107"/>
    </location>
</feature>
<feature type="strand" evidence="12">
    <location>
        <begin position="112"/>
        <end position="114"/>
    </location>
</feature>
<feature type="helix" evidence="12">
    <location>
        <begin position="116"/>
        <end position="120"/>
    </location>
</feature>
<feature type="strand" evidence="12">
    <location>
        <begin position="127"/>
        <end position="130"/>
    </location>
</feature>
<feature type="strand" evidence="12">
    <location>
        <begin position="135"/>
        <end position="137"/>
    </location>
</feature>
<feature type="strand" evidence="11">
    <location>
        <begin position="144"/>
        <end position="147"/>
    </location>
</feature>
<feature type="strand" evidence="12">
    <location>
        <begin position="157"/>
        <end position="161"/>
    </location>
</feature>
<feature type="strand" evidence="12">
    <location>
        <begin position="164"/>
        <end position="176"/>
    </location>
</feature>
<feature type="turn" evidence="12">
    <location>
        <begin position="177"/>
        <end position="180"/>
    </location>
</feature>
<feature type="strand" evidence="12">
    <location>
        <begin position="181"/>
        <end position="186"/>
    </location>
</feature>
<feature type="strand" evidence="12">
    <location>
        <begin position="194"/>
        <end position="199"/>
    </location>
</feature>
<reference key="1">
    <citation type="journal article" date="1999" name="Science">
        <title>Genome sequence of the radioresistant bacterium Deinococcus radiodurans R1.</title>
        <authorList>
            <person name="White O."/>
            <person name="Eisen J.A."/>
            <person name="Heidelberg J.F."/>
            <person name="Hickey E.K."/>
            <person name="Peterson J.D."/>
            <person name="Dodson R.J."/>
            <person name="Haft D.H."/>
            <person name="Gwinn M.L."/>
            <person name="Nelson W.C."/>
            <person name="Richardson D.L."/>
            <person name="Moffat K.S."/>
            <person name="Qin H."/>
            <person name="Jiang L."/>
            <person name="Pamphile W."/>
            <person name="Crosby M."/>
            <person name="Shen M."/>
            <person name="Vamathevan J.J."/>
            <person name="Lam P."/>
            <person name="McDonald L.A."/>
            <person name="Utterback T.R."/>
            <person name="Zalewski C."/>
            <person name="Makarova K.S."/>
            <person name="Aravind L."/>
            <person name="Daly M.J."/>
            <person name="Minton K.W."/>
            <person name="Fleischmann R.D."/>
            <person name="Ketchum K.A."/>
            <person name="Nelson K.E."/>
            <person name="Salzberg S.L."/>
            <person name="Smith H.O."/>
            <person name="Venter J.C."/>
            <person name="Fraser C.M."/>
        </authorList>
    </citation>
    <scope>NUCLEOTIDE SEQUENCE [LARGE SCALE GENOMIC DNA]</scope>
    <source>
        <strain>ATCC 13939 / DSM 20539 / JCM 16871 / CCUG 27074 / LMG 4051 / NBRC 15346 / NCIMB 9279 / VKM B-1422 / R1</strain>
    </source>
</reference>
<reference key="2">
    <citation type="journal article" date="2001" name="Cell">
        <title>High resolution structure of the large ribosomal subunit from a mesophilic eubacterium.</title>
        <authorList>
            <person name="Harms J."/>
            <person name="Schluenzen F."/>
            <person name="Zarivach R."/>
            <person name="Bashan A."/>
            <person name="Gat S."/>
            <person name="Agmon I."/>
            <person name="Bartels H."/>
            <person name="Franceschi F."/>
            <person name="Yonath A."/>
        </authorList>
    </citation>
    <scope>X-RAY CRYSTALLOGRAPHY (3.1 ANGSTROMS) OF THE 50S SUBUNIT</scope>
    <scope>PROTEIN SEQUENCE OF 1-5</scope>
    <source>
        <strain>ATCC 13939 / DSM 20539 / JCM 16871 / CCUG 27074 / LMG 4051 / NBRC 15346 / NCIMB 9279 / VKM B-1422 / R1</strain>
    </source>
</reference>
<reference key="3">
    <citation type="journal article" date="2001" name="Nature">
        <title>Structural basis for the interaction of antibiotics with the peptidyl transferase centre in eubacteria.</title>
        <authorList>
            <person name="Schluenzen F."/>
            <person name="Zarivach R."/>
            <person name="Harms J."/>
            <person name="Bashan A."/>
            <person name="Tocilj A."/>
            <person name="Albrecht R."/>
            <person name="Yonath A."/>
            <person name="Franceschi F."/>
        </authorList>
    </citation>
    <scope>X-RAY CRYSTALLOGRAPHY (3.1 ANGSTROMS) OF THE 50S SUBUNIT IN COMPLEX WITH FIVE ANTIBIOTICS</scope>
    <source>
        <strain>ATCC 13939 / DSM 20539 / JCM 16871 / CCUG 27074 / LMG 4051 / NBRC 15346 / NCIMB 9279 / VKM B-1422 / R1</strain>
    </source>
</reference>
<reference key="4">
    <citation type="journal article" date="2003" name="Mol. Cell">
        <title>Structural basis of the ribosomal machinery for peptide bond formation, translocation, and nascent chain progression.</title>
        <authorList>
            <person name="Bashan A."/>
            <person name="Agmon I."/>
            <person name="Zarivach R."/>
            <person name="Schluenzen F."/>
            <person name="Harms J."/>
            <person name="Berisio R."/>
            <person name="Bartels H."/>
            <person name="Franceschi F."/>
            <person name="Auerbach T."/>
            <person name="Hansen H.A."/>
            <person name="Kossoy E."/>
            <person name="Kessler M."/>
            <person name="Yonath A."/>
        </authorList>
    </citation>
    <scope>X-RAY CRYSTALLOGRAPHY (3.5 ANGSTROMS) OF THE 50S SUBUNIT IN COMPLEX WITH TRNA MIMICS</scope>
    <source>
        <strain>ATCC 13939 / DSM 20539 / JCM 16871 / CCUG 27074 / LMG 4051 / NBRC 15346 / NCIMB 9279 / VKM B-1422 / R1</strain>
    </source>
</reference>
<reference key="5">
    <citation type="journal article" date="2003" name="Structure">
        <title>Structural basis for the antibiotic activity of ketolides and azalides.</title>
        <authorList>
            <person name="Schluenzen F."/>
            <person name="Harms J.M."/>
            <person name="Franceschi F."/>
            <person name="Hansen H.A."/>
            <person name="Bartels H."/>
            <person name="Zarivach R."/>
            <person name="Yonath A."/>
        </authorList>
    </citation>
    <scope>X-RAY CRYSTALLOGRAPHY (3.3 ANGSTROMS) OF THE 50S SUBUNIT IN COMPLEX WITH MODIFIED MACROLIDE ANTIBIOTICS</scope>
    <source>
        <strain>ATCC 13939 / DSM 20539 / JCM 16871 / CCUG 27074 / LMG 4051 / NBRC 15346 / NCIMB 9279 / VKM B-1422 / R1</strain>
    </source>
</reference>
<reference key="6">
    <citation type="journal article" date="2003" name="Nat. Struct. Biol.">
        <title>Structural insight into the role of the ribosomal tunnel in cellular regulation.</title>
        <authorList>
            <person name="Berisio R."/>
            <person name="Schluenzen F."/>
            <person name="Harms J."/>
            <person name="Bashan A."/>
            <person name="Auerbach T."/>
            <person name="Baram D."/>
            <person name="Yonath A."/>
        </authorList>
    </citation>
    <scope>X-RAY CRYSTALLOGRAPHY (3.4 ANGSTROMS) OF THE 50S SUBUNIT IN COMPLEX WITH TROLEANDOMYCIN</scope>
    <source>
        <strain>ATCC 13939 / DSM 20539 / JCM 16871 / CCUG 27074 / LMG 4051 / NBRC 15346 / NCIMB 9279 / VKM B-1422 / R1</strain>
    </source>
</reference>
<reference key="7">
    <citation type="journal article" date="2004" name="BMC Biol.">
        <title>Alterations at the peptidyl transferase centre of the ribosome induced by the synergistic action of the streptogramins dalfopristin and quinupristin.</title>
        <authorList>
            <person name="Harms J.M."/>
            <person name="Schluenzen F."/>
            <person name="Fucini P."/>
            <person name="Bartels H."/>
            <person name="Yonath A."/>
        </authorList>
    </citation>
    <scope>X-RAY CRYSTALLOGRAPHY (3.4 ANGSTROMS) OF THE 50S SUBUNIT IN COMPLEX WITH THE STREPTOGRAMINS QUINUPRISTIN AND DALFOPRISTIN</scope>
    <source>
        <strain>ATCC 13939 / DSM 20539 / JCM 16871 / CCUG 27074 / LMG 4051 / NBRC 15346 / NCIMB 9279 / VKM B-1422 / R1</strain>
    </source>
</reference>
<reference key="8">
    <citation type="journal article" date="2004" name="Mol. Microbiol.">
        <title>Inhibition of peptide bond formation by pleuromutilins: the structure of the 50S ribosomal subunit from Deinococcus radiodurans in complex with tiamulin.</title>
        <authorList>
            <person name="Schluenzen F."/>
            <person name="Pyetan E."/>
            <person name="Fucini P."/>
            <person name="Yonath A."/>
            <person name="Harms J.M."/>
        </authorList>
    </citation>
    <scope>X-RAY CRYSTALLOGRAPHY (3.5 ANGSTROMS) OF THE 50S SUBUNIT IN COMPLEX WITH TIAMULIN</scope>
    <source>
        <strain>ATCC 13939 / DSM 20539 / JCM 16871 / CCUG 27074 / LMG 4051 / NBRC 15346 / NCIMB 9279 / VKM B-1422 / R1</strain>
    </source>
</reference>
<protein>
    <recommendedName>
        <fullName evidence="9">Large ribosomal subunit protein uL3</fullName>
    </recommendedName>
    <alternativeName>
        <fullName>50S ribosomal protein L3</fullName>
    </alternativeName>
</protein>
<accession>Q9RXK2</accession>
<dbReference type="EMBL" id="AE000513">
    <property type="protein sequence ID" value="AAF09892.1"/>
    <property type="molecule type" value="Genomic_DNA"/>
</dbReference>
<dbReference type="PIR" id="G75533">
    <property type="entry name" value="G75533"/>
</dbReference>
<dbReference type="RefSeq" id="NP_294034.1">
    <property type="nucleotide sequence ID" value="NC_001263.1"/>
</dbReference>
<dbReference type="RefSeq" id="WP_010886956.1">
    <property type="nucleotide sequence ID" value="NC_001263.1"/>
</dbReference>
<dbReference type="PDB" id="1NKW">
    <property type="method" value="X-ray"/>
    <property type="resolution" value="3.10 A"/>
    <property type="chains" value="B=1-211"/>
</dbReference>
<dbReference type="PDB" id="1NWX">
    <property type="method" value="X-ray"/>
    <property type="resolution" value="3.50 A"/>
    <property type="chains" value="B=1-211"/>
</dbReference>
<dbReference type="PDB" id="1NWY">
    <property type="method" value="X-ray"/>
    <property type="resolution" value="3.30 A"/>
    <property type="chains" value="B=1-211"/>
</dbReference>
<dbReference type="PDB" id="1SM1">
    <property type="method" value="X-ray"/>
    <property type="resolution" value="3.42 A"/>
    <property type="chains" value="B=1-211"/>
</dbReference>
<dbReference type="PDB" id="1XBP">
    <property type="method" value="X-ray"/>
    <property type="resolution" value="3.50 A"/>
    <property type="chains" value="B=1-211"/>
</dbReference>
<dbReference type="PDB" id="2OGM">
    <property type="method" value="X-ray"/>
    <property type="resolution" value="3.50 A"/>
    <property type="chains" value="B=1-211"/>
</dbReference>
<dbReference type="PDB" id="2OGN">
    <property type="method" value="X-ray"/>
    <property type="resolution" value="3.56 A"/>
    <property type="chains" value="B=1-211"/>
</dbReference>
<dbReference type="PDB" id="2OGO">
    <property type="method" value="X-ray"/>
    <property type="resolution" value="3.66 A"/>
    <property type="chains" value="B=1-211"/>
</dbReference>
<dbReference type="PDB" id="2ZJP">
    <property type="method" value="X-ray"/>
    <property type="resolution" value="3.70 A"/>
    <property type="chains" value="B=1-211"/>
</dbReference>
<dbReference type="PDB" id="2ZJQ">
    <property type="method" value="X-ray"/>
    <property type="resolution" value="3.30 A"/>
    <property type="chains" value="B=1-211"/>
</dbReference>
<dbReference type="PDB" id="2ZJR">
    <property type="method" value="X-ray"/>
    <property type="resolution" value="2.91 A"/>
    <property type="chains" value="B=1-211"/>
</dbReference>
<dbReference type="PDB" id="3CF5">
    <property type="method" value="X-ray"/>
    <property type="resolution" value="3.30 A"/>
    <property type="chains" value="B=1-211"/>
</dbReference>
<dbReference type="PDB" id="3DLL">
    <property type="method" value="X-ray"/>
    <property type="resolution" value="3.50 A"/>
    <property type="chains" value="B=1-211"/>
</dbReference>
<dbReference type="PDB" id="3PIO">
    <property type="method" value="X-ray"/>
    <property type="resolution" value="3.25 A"/>
    <property type="chains" value="B=1-211"/>
</dbReference>
<dbReference type="PDB" id="3PIP">
    <property type="method" value="X-ray"/>
    <property type="resolution" value="3.45 A"/>
    <property type="chains" value="B=1-211"/>
</dbReference>
<dbReference type="PDB" id="4IO9">
    <property type="method" value="X-ray"/>
    <property type="resolution" value="3.20 A"/>
    <property type="chains" value="B=1-211"/>
</dbReference>
<dbReference type="PDB" id="4IOA">
    <property type="method" value="X-ray"/>
    <property type="resolution" value="3.20 A"/>
    <property type="chains" value="B=1-211"/>
</dbReference>
<dbReference type="PDB" id="4IOC">
    <property type="method" value="X-ray"/>
    <property type="resolution" value="3.60 A"/>
    <property type="chains" value="B=1-211"/>
</dbReference>
<dbReference type="PDB" id="4U67">
    <property type="method" value="X-ray"/>
    <property type="resolution" value="3.65 A"/>
    <property type="chains" value="B=1-211"/>
</dbReference>
<dbReference type="PDB" id="4V49">
    <property type="method" value="X-ray"/>
    <property type="resolution" value="8.70 A"/>
    <property type="chains" value="B=1-205"/>
</dbReference>
<dbReference type="PDB" id="4V4A">
    <property type="method" value="X-ray"/>
    <property type="resolution" value="9.50 A"/>
    <property type="chains" value="B=1-205"/>
</dbReference>
<dbReference type="PDB" id="4V4G">
    <property type="method" value="X-ray"/>
    <property type="resolution" value="11.50 A"/>
    <property type="chains" value="E=1-205"/>
</dbReference>
<dbReference type="PDB" id="4WFN">
    <property type="method" value="X-ray"/>
    <property type="resolution" value="3.54 A"/>
    <property type="chains" value="B=1-211"/>
</dbReference>
<dbReference type="PDB" id="5DM6">
    <property type="method" value="X-ray"/>
    <property type="resolution" value="2.90 A"/>
    <property type="chains" value="B=1-205"/>
</dbReference>
<dbReference type="PDB" id="5DM7">
    <property type="method" value="X-ray"/>
    <property type="resolution" value="3.00 A"/>
    <property type="chains" value="B=1-205"/>
</dbReference>
<dbReference type="PDB" id="5JVG">
    <property type="method" value="X-ray"/>
    <property type="resolution" value="3.43 A"/>
    <property type="chains" value="B=1-211"/>
</dbReference>
<dbReference type="PDB" id="5JVH">
    <property type="method" value="X-ray"/>
    <property type="resolution" value="3.58 A"/>
    <property type="chains" value="B=1-211"/>
</dbReference>
<dbReference type="PDB" id="7A0R">
    <property type="method" value="X-ray"/>
    <property type="resolution" value="3.30 A"/>
    <property type="chains" value="B=1-206"/>
</dbReference>
<dbReference type="PDB" id="7A0S">
    <property type="method" value="X-ray"/>
    <property type="resolution" value="3.22 A"/>
    <property type="chains" value="B=1-206"/>
</dbReference>
<dbReference type="PDB" id="7A18">
    <property type="method" value="X-ray"/>
    <property type="resolution" value="3.40 A"/>
    <property type="chains" value="B=1-206"/>
</dbReference>
<dbReference type="PDBsum" id="1NKW"/>
<dbReference type="PDBsum" id="1NWX"/>
<dbReference type="PDBsum" id="1NWY"/>
<dbReference type="PDBsum" id="1SM1"/>
<dbReference type="PDBsum" id="1XBP"/>
<dbReference type="PDBsum" id="2OGM"/>
<dbReference type="PDBsum" id="2OGN"/>
<dbReference type="PDBsum" id="2OGO"/>
<dbReference type="PDBsum" id="2ZJP"/>
<dbReference type="PDBsum" id="2ZJQ"/>
<dbReference type="PDBsum" id="2ZJR"/>
<dbReference type="PDBsum" id="3CF5"/>
<dbReference type="PDBsum" id="3DLL"/>
<dbReference type="PDBsum" id="3PIO"/>
<dbReference type="PDBsum" id="3PIP"/>
<dbReference type="PDBsum" id="4IO9"/>
<dbReference type="PDBsum" id="4IOA"/>
<dbReference type="PDBsum" id="4IOC"/>
<dbReference type="PDBsum" id="4U67"/>
<dbReference type="PDBsum" id="4V49"/>
<dbReference type="PDBsum" id="4V4A"/>
<dbReference type="PDBsum" id="4V4G"/>
<dbReference type="PDBsum" id="4WFN"/>
<dbReference type="PDBsum" id="5DM6"/>
<dbReference type="PDBsum" id="5DM7"/>
<dbReference type="PDBsum" id="5JVG"/>
<dbReference type="PDBsum" id="5JVH"/>
<dbReference type="PDBsum" id="7A0R"/>
<dbReference type="PDBsum" id="7A0S"/>
<dbReference type="PDBsum" id="7A18"/>
<dbReference type="SMR" id="Q9RXK2"/>
<dbReference type="FunCoup" id="Q9RXK2">
    <property type="interactions" value="496"/>
</dbReference>
<dbReference type="IntAct" id="Q9RXK2">
    <property type="interactions" value="1"/>
</dbReference>
<dbReference type="STRING" id="243230.DR_0311"/>
<dbReference type="PaxDb" id="243230-DR_0311"/>
<dbReference type="EnsemblBacteria" id="AAF09892">
    <property type="protein sequence ID" value="AAF09892"/>
    <property type="gene ID" value="DR_0311"/>
</dbReference>
<dbReference type="GeneID" id="69516543"/>
<dbReference type="KEGG" id="dra:DR_0311"/>
<dbReference type="PATRIC" id="fig|243230.17.peg.477"/>
<dbReference type="eggNOG" id="COG0087">
    <property type="taxonomic scope" value="Bacteria"/>
</dbReference>
<dbReference type="HOGENOM" id="CLU_044142_4_1_0"/>
<dbReference type="InParanoid" id="Q9RXK2"/>
<dbReference type="OrthoDB" id="9806135at2"/>
<dbReference type="EvolutionaryTrace" id="Q9RXK2"/>
<dbReference type="Proteomes" id="UP000002524">
    <property type="component" value="Chromosome 1"/>
</dbReference>
<dbReference type="GO" id="GO:0022625">
    <property type="term" value="C:cytosolic large ribosomal subunit"/>
    <property type="evidence" value="ECO:0000318"/>
    <property type="project" value="GO_Central"/>
</dbReference>
<dbReference type="GO" id="GO:0019843">
    <property type="term" value="F:rRNA binding"/>
    <property type="evidence" value="ECO:0007669"/>
    <property type="project" value="UniProtKB-UniRule"/>
</dbReference>
<dbReference type="GO" id="GO:0003735">
    <property type="term" value="F:structural constituent of ribosome"/>
    <property type="evidence" value="ECO:0000318"/>
    <property type="project" value="GO_Central"/>
</dbReference>
<dbReference type="GO" id="GO:0006412">
    <property type="term" value="P:translation"/>
    <property type="evidence" value="ECO:0007669"/>
    <property type="project" value="UniProtKB-UniRule"/>
</dbReference>
<dbReference type="FunFam" id="2.40.30.10:FF:000004">
    <property type="entry name" value="50S ribosomal protein L3"/>
    <property type="match status" value="1"/>
</dbReference>
<dbReference type="FunFam" id="3.30.160.810:FF:000001">
    <property type="entry name" value="50S ribosomal protein L3"/>
    <property type="match status" value="1"/>
</dbReference>
<dbReference type="Gene3D" id="3.30.160.810">
    <property type="match status" value="1"/>
</dbReference>
<dbReference type="Gene3D" id="2.40.30.10">
    <property type="entry name" value="Translation factors"/>
    <property type="match status" value="1"/>
</dbReference>
<dbReference type="HAMAP" id="MF_01325_B">
    <property type="entry name" value="Ribosomal_uL3_B"/>
    <property type="match status" value="1"/>
</dbReference>
<dbReference type="InterPro" id="IPR000597">
    <property type="entry name" value="Ribosomal_uL3"/>
</dbReference>
<dbReference type="InterPro" id="IPR019927">
    <property type="entry name" value="Ribosomal_uL3_bac/org-type"/>
</dbReference>
<dbReference type="InterPro" id="IPR019926">
    <property type="entry name" value="Ribosomal_uL3_CS"/>
</dbReference>
<dbReference type="InterPro" id="IPR009000">
    <property type="entry name" value="Transl_B-barrel_sf"/>
</dbReference>
<dbReference type="NCBIfam" id="TIGR03625">
    <property type="entry name" value="L3_bact"/>
    <property type="match status" value="1"/>
</dbReference>
<dbReference type="PANTHER" id="PTHR11229">
    <property type="entry name" value="50S RIBOSOMAL PROTEIN L3"/>
    <property type="match status" value="1"/>
</dbReference>
<dbReference type="PANTHER" id="PTHR11229:SF16">
    <property type="entry name" value="LARGE RIBOSOMAL SUBUNIT PROTEIN UL3C"/>
    <property type="match status" value="1"/>
</dbReference>
<dbReference type="Pfam" id="PF00297">
    <property type="entry name" value="Ribosomal_L3"/>
    <property type="match status" value="1"/>
</dbReference>
<dbReference type="SUPFAM" id="SSF50447">
    <property type="entry name" value="Translation proteins"/>
    <property type="match status" value="1"/>
</dbReference>
<dbReference type="PROSITE" id="PS00474">
    <property type="entry name" value="RIBOSOMAL_L3"/>
    <property type="match status" value="1"/>
</dbReference>
<comment type="function">
    <text evidence="1">One of the primary rRNA binding proteins, it binds directly near the 3'-end of the 23S rRNA, where it nucleates assembly of the 50S subunit.</text>
</comment>
<comment type="subunit">
    <text evidence="3 4 5 6 7 8">Part of the 50S ribosomal subunit. Forms a cluster with proteins L14 and L19. Also contacts proteins L13 and L17.</text>
</comment>
<comment type="similarity">
    <text evidence="9">Belongs to the universal ribosomal protein uL3 family.</text>
</comment>
<proteinExistence type="evidence at protein level"/>